<evidence type="ECO:0000255" key="1">
    <source>
        <dbReference type="HAMAP-Rule" id="MF_01007"/>
    </source>
</evidence>
<proteinExistence type="inferred from homology"/>
<keyword id="KW-0963">Cytoplasm</keyword>
<keyword id="KW-0489">Methyltransferase</keyword>
<keyword id="KW-0698">rRNA processing</keyword>
<keyword id="KW-0949">S-adenosyl-L-methionine</keyword>
<keyword id="KW-0808">Transferase</keyword>
<dbReference type="EC" id="2.1.1.199" evidence="1"/>
<dbReference type="EMBL" id="AM181176">
    <property type="protein sequence ID" value="CAY47205.1"/>
    <property type="molecule type" value="Genomic_DNA"/>
</dbReference>
<dbReference type="SMR" id="C3KCS2"/>
<dbReference type="STRING" id="294.SRM1_04729"/>
<dbReference type="eggNOG" id="COG0275">
    <property type="taxonomic scope" value="Bacteria"/>
</dbReference>
<dbReference type="HOGENOM" id="CLU_038422_2_0_6"/>
<dbReference type="GO" id="GO:0005737">
    <property type="term" value="C:cytoplasm"/>
    <property type="evidence" value="ECO:0007669"/>
    <property type="project" value="UniProtKB-SubCell"/>
</dbReference>
<dbReference type="GO" id="GO:0071424">
    <property type="term" value="F:rRNA (cytosine-N4-)-methyltransferase activity"/>
    <property type="evidence" value="ECO:0007669"/>
    <property type="project" value="UniProtKB-UniRule"/>
</dbReference>
<dbReference type="GO" id="GO:0070475">
    <property type="term" value="P:rRNA base methylation"/>
    <property type="evidence" value="ECO:0007669"/>
    <property type="project" value="UniProtKB-UniRule"/>
</dbReference>
<dbReference type="Gene3D" id="1.10.150.170">
    <property type="entry name" value="Putative methyltransferase TM0872, insert domain"/>
    <property type="match status" value="1"/>
</dbReference>
<dbReference type="Gene3D" id="3.40.50.150">
    <property type="entry name" value="Vaccinia Virus protein VP39"/>
    <property type="match status" value="1"/>
</dbReference>
<dbReference type="HAMAP" id="MF_01007">
    <property type="entry name" value="16SrRNA_methyltr_H"/>
    <property type="match status" value="1"/>
</dbReference>
<dbReference type="InterPro" id="IPR002903">
    <property type="entry name" value="RsmH"/>
</dbReference>
<dbReference type="InterPro" id="IPR023397">
    <property type="entry name" value="SAM-dep_MeTrfase_MraW_recog"/>
</dbReference>
<dbReference type="InterPro" id="IPR029063">
    <property type="entry name" value="SAM-dependent_MTases_sf"/>
</dbReference>
<dbReference type="NCBIfam" id="TIGR00006">
    <property type="entry name" value="16S rRNA (cytosine(1402)-N(4))-methyltransferase RsmH"/>
    <property type="match status" value="1"/>
</dbReference>
<dbReference type="PANTHER" id="PTHR11265:SF0">
    <property type="entry name" value="12S RRNA N4-METHYLCYTIDINE METHYLTRANSFERASE"/>
    <property type="match status" value="1"/>
</dbReference>
<dbReference type="PANTHER" id="PTHR11265">
    <property type="entry name" value="S-ADENOSYL-METHYLTRANSFERASE MRAW"/>
    <property type="match status" value="1"/>
</dbReference>
<dbReference type="Pfam" id="PF01795">
    <property type="entry name" value="Methyltransf_5"/>
    <property type="match status" value="1"/>
</dbReference>
<dbReference type="PIRSF" id="PIRSF004486">
    <property type="entry name" value="MraW"/>
    <property type="match status" value="1"/>
</dbReference>
<dbReference type="SUPFAM" id="SSF81799">
    <property type="entry name" value="Putative methyltransferase TM0872, insert domain"/>
    <property type="match status" value="1"/>
</dbReference>
<dbReference type="SUPFAM" id="SSF53335">
    <property type="entry name" value="S-adenosyl-L-methionine-dependent methyltransferases"/>
    <property type="match status" value="1"/>
</dbReference>
<organism>
    <name type="scientific">Pseudomonas fluorescens (strain SBW25)</name>
    <dbReference type="NCBI Taxonomy" id="216595"/>
    <lineage>
        <taxon>Bacteria</taxon>
        <taxon>Pseudomonadati</taxon>
        <taxon>Pseudomonadota</taxon>
        <taxon>Gammaproteobacteria</taxon>
        <taxon>Pseudomonadales</taxon>
        <taxon>Pseudomonadaceae</taxon>
        <taxon>Pseudomonas</taxon>
    </lineage>
</organism>
<comment type="function">
    <text evidence="1">Specifically methylates the N4 position of cytidine in position 1402 (C1402) of 16S rRNA.</text>
</comment>
<comment type="catalytic activity">
    <reaction evidence="1">
        <text>cytidine(1402) in 16S rRNA + S-adenosyl-L-methionine = N(4)-methylcytidine(1402) in 16S rRNA + S-adenosyl-L-homocysteine + H(+)</text>
        <dbReference type="Rhea" id="RHEA:42928"/>
        <dbReference type="Rhea" id="RHEA-COMP:10286"/>
        <dbReference type="Rhea" id="RHEA-COMP:10287"/>
        <dbReference type="ChEBI" id="CHEBI:15378"/>
        <dbReference type="ChEBI" id="CHEBI:57856"/>
        <dbReference type="ChEBI" id="CHEBI:59789"/>
        <dbReference type="ChEBI" id="CHEBI:74506"/>
        <dbReference type="ChEBI" id="CHEBI:82748"/>
        <dbReference type="EC" id="2.1.1.199"/>
    </reaction>
</comment>
<comment type="subcellular location">
    <subcellularLocation>
        <location evidence="1">Cytoplasm</location>
    </subcellularLocation>
</comment>
<comment type="similarity">
    <text evidence="1">Belongs to the methyltransferase superfamily. RsmH family.</text>
</comment>
<protein>
    <recommendedName>
        <fullName evidence="1">Ribosomal RNA small subunit methyltransferase H</fullName>
        <ecNumber evidence="1">2.1.1.199</ecNumber>
    </recommendedName>
    <alternativeName>
        <fullName evidence="1">16S rRNA m(4)C1402 methyltransferase</fullName>
    </alternativeName>
    <alternativeName>
        <fullName evidence="1">rRNA (cytosine-N(4)-)-methyltransferase RsmH</fullName>
    </alternativeName>
</protein>
<feature type="chain" id="PRO_0000387053" description="Ribosomal RNA small subunit methyltransferase H">
    <location>
        <begin position="1"/>
        <end position="315"/>
    </location>
</feature>
<feature type="binding site" evidence="1">
    <location>
        <begin position="37"/>
        <end position="39"/>
    </location>
    <ligand>
        <name>S-adenosyl-L-methionine</name>
        <dbReference type="ChEBI" id="CHEBI:59789"/>
    </ligand>
</feature>
<feature type="binding site" evidence="1">
    <location>
        <position position="57"/>
    </location>
    <ligand>
        <name>S-adenosyl-L-methionine</name>
        <dbReference type="ChEBI" id="CHEBI:59789"/>
    </ligand>
</feature>
<feature type="binding site" evidence="1">
    <location>
        <position position="83"/>
    </location>
    <ligand>
        <name>S-adenosyl-L-methionine</name>
        <dbReference type="ChEBI" id="CHEBI:59789"/>
    </ligand>
</feature>
<feature type="binding site" evidence="1">
    <location>
        <position position="105"/>
    </location>
    <ligand>
        <name>S-adenosyl-L-methionine</name>
        <dbReference type="ChEBI" id="CHEBI:59789"/>
    </ligand>
</feature>
<feature type="binding site" evidence="1">
    <location>
        <position position="112"/>
    </location>
    <ligand>
        <name>S-adenosyl-L-methionine</name>
        <dbReference type="ChEBI" id="CHEBI:59789"/>
    </ligand>
</feature>
<gene>
    <name evidence="1" type="primary">rsmH</name>
    <name type="synonym">mraW</name>
    <name type="ordered locus">PFLU_0939</name>
</gene>
<accession>C3KCS2</accession>
<sequence length="315" mass="34365">MTIDSGFNHITVLLDEAVEALAVRADGCYLDGTFGRGGHSRLILSQLGSDGKLLGFDKDPQAIATGQALAAEDGRFVVVQRSFAELGAEVAERGMAGKVAGVLLDLGVSSPQLDDPERGFSFMNDGPLDMRMDPTRGVSAAQFIATAPVEEIARVFKEYGEERFAGRMARAVVERREIQPFERTADLAEVLKVANPAWEKGKNPATRAFQGLRIHVNNELGDLEAGLEAALEALEVGGRLVVISFHSLEDRIVKLFMRRLVKGESDNLPRNLPVRFEAFVPKIKIHGKAQFASEAELKANPRSRSAVMRVAEKLR</sequence>
<name>RSMH_PSEFS</name>
<reference key="1">
    <citation type="journal article" date="2009" name="Genome Biol.">
        <title>Genomic and genetic analyses of diversity and plant interactions of Pseudomonas fluorescens.</title>
        <authorList>
            <person name="Silby M.W."/>
            <person name="Cerdeno-Tarraga A.M."/>
            <person name="Vernikos G.S."/>
            <person name="Giddens S.R."/>
            <person name="Jackson R.W."/>
            <person name="Preston G.M."/>
            <person name="Zhang X.-X."/>
            <person name="Moon C.D."/>
            <person name="Gehrig S.M."/>
            <person name="Godfrey S.A.C."/>
            <person name="Knight C.G."/>
            <person name="Malone J.G."/>
            <person name="Robinson Z."/>
            <person name="Spiers A.J."/>
            <person name="Harris S."/>
            <person name="Challis G.L."/>
            <person name="Yaxley A.M."/>
            <person name="Harris D."/>
            <person name="Seeger K."/>
            <person name="Murphy L."/>
            <person name="Rutter S."/>
            <person name="Squares R."/>
            <person name="Quail M.A."/>
            <person name="Saunders E."/>
            <person name="Mavromatis K."/>
            <person name="Brettin T.S."/>
            <person name="Bentley S.D."/>
            <person name="Hothersall J."/>
            <person name="Stephens E."/>
            <person name="Thomas C.M."/>
            <person name="Parkhill J."/>
            <person name="Levy S.B."/>
            <person name="Rainey P.B."/>
            <person name="Thomson N.R."/>
        </authorList>
    </citation>
    <scope>NUCLEOTIDE SEQUENCE [LARGE SCALE GENOMIC DNA]</scope>
    <source>
        <strain>SBW25</strain>
    </source>
</reference>